<organism>
    <name type="scientific">Clostridium botulinum (strain Hall / ATCC 3502 / NCTC 13319 / Type A)</name>
    <dbReference type="NCBI Taxonomy" id="441771"/>
    <lineage>
        <taxon>Bacteria</taxon>
        <taxon>Bacillati</taxon>
        <taxon>Bacillota</taxon>
        <taxon>Clostridia</taxon>
        <taxon>Eubacteriales</taxon>
        <taxon>Clostridiaceae</taxon>
        <taxon>Clostridium</taxon>
    </lineage>
</organism>
<name>RL16_CLOBH</name>
<accession>A5I7J9</accession>
<accession>A7G8T1</accession>
<evidence type="ECO:0000255" key="1">
    <source>
        <dbReference type="HAMAP-Rule" id="MF_01342"/>
    </source>
</evidence>
<evidence type="ECO:0000305" key="2"/>
<sequence length="147" mass="16542">MLMPKRVKRRKVQRGRMKGKATRGNFIAYGDFGIQATECGWITSNQIEAARIAINRYVKRGGKVWIKIFPDKPVTEKPAETRMGSGKGSPEYWVAVVKPGRVLFEISGVSETVAREAMRLASHKLPVKTKFVTRRDFEEMGGEVNEG</sequence>
<protein>
    <recommendedName>
        <fullName evidence="1">Large ribosomal subunit protein uL16</fullName>
    </recommendedName>
    <alternativeName>
        <fullName evidence="2">50S ribosomal protein L16</fullName>
    </alternativeName>
</protein>
<dbReference type="EMBL" id="CP000727">
    <property type="protein sequence ID" value="ABS39272.1"/>
    <property type="molecule type" value="Genomic_DNA"/>
</dbReference>
<dbReference type="EMBL" id="AM412317">
    <property type="protein sequence ID" value="CAL85034.1"/>
    <property type="molecule type" value="Genomic_DNA"/>
</dbReference>
<dbReference type="RefSeq" id="WP_003357619.1">
    <property type="nucleotide sequence ID" value="NC_009698.1"/>
</dbReference>
<dbReference type="RefSeq" id="YP_001255955.1">
    <property type="nucleotide sequence ID" value="NC_009495.1"/>
</dbReference>
<dbReference type="RefSeq" id="YP_001389196.1">
    <property type="nucleotide sequence ID" value="NC_009698.1"/>
</dbReference>
<dbReference type="SMR" id="A5I7J9"/>
<dbReference type="GeneID" id="92940243"/>
<dbReference type="KEGG" id="cbh:CLC_3418"/>
<dbReference type="KEGG" id="cbo:CBO3473"/>
<dbReference type="PATRIC" id="fig|413999.7.peg.3450"/>
<dbReference type="HOGENOM" id="CLU_078858_2_1_9"/>
<dbReference type="PRO" id="PR:A5I7J9"/>
<dbReference type="Proteomes" id="UP000001986">
    <property type="component" value="Chromosome"/>
</dbReference>
<dbReference type="GO" id="GO:0022625">
    <property type="term" value="C:cytosolic large ribosomal subunit"/>
    <property type="evidence" value="ECO:0000318"/>
    <property type="project" value="GO_Central"/>
</dbReference>
<dbReference type="GO" id="GO:0019843">
    <property type="term" value="F:rRNA binding"/>
    <property type="evidence" value="ECO:0000318"/>
    <property type="project" value="GO_Central"/>
</dbReference>
<dbReference type="GO" id="GO:0003735">
    <property type="term" value="F:structural constituent of ribosome"/>
    <property type="evidence" value="ECO:0000318"/>
    <property type="project" value="GO_Central"/>
</dbReference>
<dbReference type="GO" id="GO:0000049">
    <property type="term" value="F:tRNA binding"/>
    <property type="evidence" value="ECO:0007669"/>
    <property type="project" value="UniProtKB-KW"/>
</dbReference>
<dbReference type="GO" id="GO:0006412">
    <property type="term" value="P:translation"/>
    <property type="evidence" value="ECO:0007669"/>
    <property type="project" value="UniProtKB-UniRule"/>
</dbReference>
<dbReference type="CDD" id="cd01433">
    <property type="entry name" value="Ribosomal_L16_L10e"/>
    <property type="match status" value="1"/>
</dbReference>
<dbReference type="FunFam" id="3.90.1170.10:FF:000001">
    <property type="entry name" value="50S ribosomal protein L16"/>
    <property type="match status" value="1"/>
</dbReference>
<dbReference type="Gene3D" id="3.90.1170.10">
    <property type="entry name" value="Ribosomal protein L10e/L16"/>
    <property type="match status" value="1"/>
</dbReference>
<dbReference type="HAMAP" id="MF_01342">
    <property type="entry name" value="Ribosomal_uL16"/>
    <property type="match status" value="1"/>
</dbReference>
<dbReference type="InterPro" id="IPR047873">
    <property type="entry name" value="Ribosomal_uL16"/>
</dbReference>
<dbReference type="InterPro" id="IPR000114">
    <property type="entry name" value="Ribosomal_uL16_bact-type"/>
</dbReference>
<dbReference type="InterPro" id="IPR020798">
    <property type="entry name" value="Ribosomal_uL16_CS"/>
</dbReference>
<dbReference type="InterPro" id="IPR016180">
    <property type="entry name" value="Ribosomal_uL16_dom"/>
</dbReference>
<dbReference type="InterPro" id="IPR036920">
    <property type="entry name" value="Ribosomal_uL16_sf"/>
</dbReference>
<dbReference type="NCBIfam" id="TIGR01164">
    <property type="entry name" value="rplP_bact"/>
    <property type="match status" value="1"/>
</dbReference>
<dbReference type="PANTHER" id="PTHR12220">
    <property type="entry name" value="50S/60S RIBOSOMAL PROTEIN L16"/>
    <property type="match status" value="1"/>
</dbReference>
<dbReference type="PANTHER" id="PTHR12220:SF13">
    <property type="entry name" value="LARGE RIBOSOMAL SUBUNIT PROTEIN UL16M"/>
    <property type="match status" value="1"/>
</dbReference>
<dbReference type="Pfam" id="PF00252">
    <property type="entry name" value="Ribosomal_L16"/>
    <property type="match status" value="1"/>
</dbReference>
<dbReference type="PRINTS" id="PR00060">
    <property type="entry name" value="RIBOSOMALL16"/>
</dbReference>
<dbReference type="SUPFAM" id="SSF54686">
    <property type="entry name" value="Ribosomal protein L16p/L10e"/>
    <property type="match status" value="1"/>
</dbReference>
<dbReference type="PROSITE" id="PS00586">
    <property type="entry name" value="RIBOSOMAL_L16_1"/>
    <property type="match status" value="1"/>
</dbReference>
<dbReference type="PROSITE" id="PS00701">
    <property type="entry name" value="RIBOSOMAL_L16_2"/>
    <property type="match status" value="1"/>
</dbReference>
<comment type="function">
    <text evidence="1">Binds 23S rRNA and is also seen to make contacts with the A and possibly P site tRNAs.</text>
</comment>
<comment type="subunit">
    <text evidence="1">Part of the 50S ribosomal subunit.</text>
</comment>
<comment type="similarity">
    <text evidence="1">Belongs to the universal ribosomal protein uL16 family.</text>
</comment>
<reference key="1">
    <citation type="journal article" date="2007" name="Genome Res.">
        <title>Genome sequence of a proteolytic (Group I) Clostridium botulinum strain Hall A and comparative analysis of the clostridial genomes.</title>
        <authorList>
            <person name="Sebaihia M."/>
            <person name="Peck M.W."/>
            <person name="Minton N.P."/>
            <person name="Thomson N.R."/>
            <person name="Holden M.T.G."/>
            <person name="Mitchell W.J."/>
            <person name="Carter A.T."/>
            <person name="Bentley S.D."/>
            <person name="Mason D.R."/>
            <person name="Crossman L."/>
            <person name="Paul C.J."/>
            <person name="Ivens A."/>
            <person name="Wells-Bennik M.H.J."/>
            <person name="Davis I.J."/>
            <person name="Cerdeno-Tarraga A.M."/>
            <person name="Churcher C."/>
            <person name="Quail M.A."/>
            <person name="Chillingworth T."/>
            <person name="Feltwell T."/>
            <person name="Fraser A."/>
            <person name="Goodhead I."/>
            <person name="Hance Z."/>
            <person name="Jagels K."/>
            <person name="Larke N."/>
            <person name="Maddison M."/>
            <person name="Moule S."/>
            <person name="Mungall K."/>
            <person name="Norbertczak H."/>
            <person name="Rabbinowitsch E."/>
            <person name="Sanders M."/>
            <person name="Simmonds M."/>
            <person name="White B."/>
            <person name="Whithead S."/>
            <person name="Parkhill J."/>
        </authorList>
    </citation>
    <scope>NUCLEOTIDE SEQUENCE [LARGE SCALE GENOMIC DNA]</scope>
    <source>
        <strain>Hall / ATCC 3502 / NCTC 13319 / Type A</strain>
    </source>
</reference>
<reference key="2">
    <citation type="journal article" date="2007" name="PLoS ONE">
        <title>Analysis of the neurotoxin complex genes in Clostridium botulinum A1-A4 and B1 strains: BoNT/A3, /Ba4 and /B1 clusters are located within plasmids.</title>
        <authorList>
            <person name="Smith T.J."/>
            <person name="Hill K.K."/>
            <person name="Foley B.T."/>
            <person name="Detter J.C."/>
            <person name="Munk A.C."/>
            <person name="Bruce D.C."/>
            <person name="Doggett N.A."/>
            <person name="Smith L.A."/>
            <person name="Marks J.D."/>
            <person name="Xie G."/>
            <person name="Brettin T.S."/>
        </authorList>
    </citation>
    <scope>NUCLEOTIDE SEQUENCE [LARGE SCALE GENOMIC DNA]</scope>
    <source>
        <strain>Hall / ATCC 3502 / NCTC 13319 / Type A</strain>
    </source>
</reference>
<gene>
    <name evidence="1" type="primary">rplP</name>
    <name type="ordered locus">CBO3473</name>
    <name type="ordered locus">CLC_3418</name>
</gene>
<proteinExistence type="inferred from homology"/>
<feature type="chain" id="PRO_1000054606" description="Large ribosomal subunit protein uL16">
    <location>
        <begin position="1"/>
        <end position="147"/>
    </location>
</feature>
<keyword id="KW-1185">Reference proteome</keyword>
<keyword id="KW-0687">Ribonucleoprotein</keyword>
<keyword id="KW-0689">Ribosomal protein</keyword>
<keyword id="KW-0694">RNA-binding</keyword>
<keyword id="KW-0699">rRNA-binding</keyword>
<keyword id="KW-0820">tRNA-binding</keyword>